<protein>
    <recommendedName>
        <fullName evidence="1">Thymidylate kinase</fullName>
        <ecNumber evidence="1">2.7.4.9</ecNumber>
    </recommendedName>
    <alternativeName>
        <fullName evidence="1">dTMP kinase</fullName>
    </alternativeName>
</protein>
<feature type="chain" id="PRO_1000023253" description="Thymidylate kinase">
    <location>
        <begin position="1"/>
        <end position="210"/>
    </location>
</feature>
<feature type="binding site" evidence="1">
    <location>
        <begin position="10"/>
        <end position="17"/>
    </location>
    <ligand>
        <name>ATP</name>
        <dbReference type="ChEBI" id="CHEBI:30616"/>
    </ligand>
</feature>
<sequence length="210" mass="23117">MTGLFVTLEGPEGAGKSTNRDYLAERLRERGVEVQLTREPGGTPLAERIRELLLAPSDEPMAADTELLLMFAARAQHIAGVIRPALARGAVVLCDRFTDATYAYQGGGRGLPEARIAALESFVQGDLRPDLTLVFDLPVEIGLARAAARGRLDRFEQEDRRFFEAVRQTYLQRAAQAPQRYQVLDAGLPLAEVQAGLDRLLPNLLERLHG</sequence>
<evidence type="ECO:0000255" key="1">
    <source>
        <dbReference type="HAMAP-Rule" id="MF_00165"/>
    </source>
</evidence>
<dbReference type="EC" id="2.7.4.9" evidence="1"/>
<dbReference type="EMBL" id="CP000744">
    <property type="protein sequence ID" value="ABR82686.1"/>
    <property type="molecule type" value="Genomic_DNA"/>
</dbReference>
<dbReference type="RefSeq" id="WP_012075177.1">
    <property type="nucleotide sequence ID" value="NC_009656.1"/>
</dbReference>
<dbReference type="SMR" id="A6V3D6"/>
<dbReference type="KEGG" id="pap:PSPA7_2199"/>
<dbReference type="HOGENOM" id="CLU_049131_0_2_6"/>
<dbReference type="Proteomes" id="UP000001582">
    <property type="component" value="Chromosome"/>
</dbReference>
<dbReference type="GO" id="GO:0005829">
    <property type="term" value="C:cytosol"/>
    <property type="evidence" value="ECO:0007669"/>
    <property type="project" value="TreeGrafter"/>
</dbReference>
<dbReference type="GO" id="GO:0005524">
    <property type="term" value="F:ATP binding"/>
    <property type="evidence" value="ECO:0007669"/>
    <property type="project" value="UniProtKB-UniRule"/>
</dbReference>
<dbReference type="GO" id="GO:0004798">
    <property type="term" value="F:dTMP kinase activity"/>
    <property type="evidence" value="ECO:0007669"/>
    <property type="project" value="UniProtKB-UniRule"/>
</dbReference>
<dbReference type="GO" id="GO:0006233">
    <property type="term" value="P:dTDP biosynthetic process"/>
    <property type="evidence" value="ECO:0007669"/>
    <property type="project" value="InterPro"/>
</dbReference>
<dbReference type="GO" id="GO:0006235">
    <property type="term" value="P:dTTP biosynthetic process"/>
    <property type="evidence" value="ECO:0007669"/>
    <property type="project" value="UniProtKB-UniRule"/>
</dbReference>
<dbReference type="GO" id="GO:0006227">
    <property type="term" value="P:dUDP biosynthetic process"/>
    <property type="evidence" value="ECO:0007669"/>
    <property type="project" value="TreeGrafter"/>
</dbReference>
<dbReference type="CDD" id="cd01672">
    <property type="entry name" value="TMPK"/>
    <property type="match status" value="1"/>
</dbReference>
<dbReference type="FunFam" id="3.40.50.300:FF:000321">
    <property type="entry name" value="Thymidylate kinase"/>
    <property type="match status" value="1"/>
</dbReference>
<dbReference type="Gene3D" id="3.40.50.300">
    <property type="entry name" value="P-loop containing nucleotide triphosphate hydrolases"/>
    <property type="match status" value="1"/>
</dbReference>
<dbReference type="HAMAP" id="MF_00165">
    <property type="entry name" value="Thymidylate_kinase"/>
    <property type="match status" value="1"/>
</dbReference>
<dbReference type="InterPro" id="IPR027417">
    <property type="entry name" value="P-loop_NTPase"/>
</dbReference>
<dbReference type="InterPro" id="IPR039430">
    <property type="entry name" value="Thymidylate_kin-like_dom"/>
</dbReference>
<dbReference type="InterPro" id="IPR018094">
    <property type="entry name" value="Thymidylate_kinase"/>
</dbReference>
<dbReference type="NCBIfam" id="TIGR00041">
    <property type="entry name" value="DTMP_kinase"/>
    <property type="match status" value="1"/>
</dbReference>
<dbReference type="PANTHER" id="PTHR10344">
    <property type="entry name" value="THYMIDYLATE KINASE"/>
    <property type="match status" value="1"/>
</dbReference>
<dbReference type="PANTHER" id="PTHR10344:SF4">
    <property type="entry name" value="UMP-CMP KINASE 2, MITOCHONDRIAL"/>
    <property type="match status" value="1"/>
</dbReference>
<dbReference type="Pfam" id="PF02223">
    <property type="entry name" value="Thymidylate_kin"/>
    <property type="match status" value="1"/>
</dbReference>
<dbReference type="SUPFAM" id="SSF52540">
    <property type="entry name" value="P-loop containing nucleoside triphosphate hydrolases"/>
    <property type="match status" value="1"/>
</dbReference>
<accession>A6V3D6</accession>
<gene>
    <name evidence="1" type="primary">tmk</name>
    <name type="ordered locus">PSPA7_2199</name>
</gene>
<reference key="1">
    <citation type="submission" date="2007-06" db="EMBL/GenBank/DDBJ databases">
        <authorList>
            <person name="Dodson R.J."/>
            <person name="Harkins D."/>
            <person name="Paulsen I.T."/>
        </authorList>
    </citation>
    <scope>NUCLEOTIDE SEQUENCE [LARGE SCALE GENOMIC DNA]</scope>
    <source>
        <strain>DSM 24068 / PA7</strain>
    </source>
</reference>
<organism>
    <name type="scientific">Pseudomonas paraeruginosa (strain DSM 24068 / PA7)</name>
    <name type="common">Pseudomonas aeruginosa (strain PA7)</name>
    <dbReference type="NCBI Taxonomy" id="381754"/>
    <lineage>
        <taxon>Bacteria</taxon>
        <taxon>Pseudomonadati</taxon>
        <taxon>Pseudomonadota</taxon>
        <taxon>Gammaproteobacteria</taxon>
        <taxon>Pseudomonadales</taxon>
        <taxon>Pseudomonadaceae</taxon>
        <taxon>Pseudomonas</taxon>
        <taxon>Pseudomonas paraeruginosa</taxon>
    </lineage>
</organism>
<keyword id="KW-0067">ATP-binding</keyword>
<keyword id="KW-0418">Kinase</keyword>
<keyword id="KW-0545">Nucleotide biosynthesis</keyword>
<keyword id="KW-0547">Nucleotide-binding</keyword>
<keyword id="KW-0808">Transferase</keyword>
<proteinExistence type="inferred from homology"/>
<comment type="function">
    <text evidence="1">Phosphorylation of dTMP to form dTDP in both de novo and salvage pathways of dTTP synthesis.</text>
</comment>
<comment type="catalytic activity">
    <reaction evidence="1">
        <text>dTMP + ATP = dTDP + ADP</text>
        <dbReference type="Rhea" id="RHEA:13517"/>
        <dbReference type="ChEBI" id="CHEBI:30616"/>
        <dbReference type="ChEBI" id="CHEBI:58369"/>
        <dbReference type="ChEBI" id="CHEBI:63528"/>
        <dbReference type="ChEBI" id="CHEBI:456216"/>
        <dbReference type="EC" id="2.7.4.9"/>
    </reaction>
</comment>
<comment type="similarity">
    <text evidence="1">Belongs to the thymidylate kinase family.</text>
</comment>
<name>KTHY_PSEP7</name>